<protein>
    <recommendedName>
        <fullName evidence="1">3-dehydroquinate dehydratase</fullName>
        <shortName evidence="1">3-dehydroquinase</shortName>
        <ecNumber evidence="1">4.2.1.10</ecNumber>
    </recommendedName>
    <alternativeName>
        <fullName evidence="1">Type II DHQase</fullName>
    </alternativeName>
</protein>
<sequence>MSTQSRILILNGPNLNLLGLREPAHYGSQNLEQIVNALTIQATALNVELEHLQSNREYELIEAIHNAYQRIDFIIINPAAFTHTSVALRDALLGVDIPFIEVHLSNVHAREPFRHHSYLSDKAVGVICGLGADGYEFALKAAVKRLRSN</sequence>
<keyword id="KW-0028">Amino-acid biosynthesis</keyword>
<keyword id="KW-0057">Aromatic amino acid biosynthesis</keyword>
<keyword id="KW-0456">Lyase</keyword>
<dbReference type="EC" id="4.2.1.10" evidence="1"/>
<dbReference type="EMBL" id="FM178379">
    <property type="protein sequence ID" value="CAQ80518.1"/>
    <property type="molecule type" value="Genomic_DNA"/>
</dbReference>
<dbReference type="RefSeq" id="WP_012551265.1">
    <property type="nucleotide sequence ID" value="NC_011312.1"/>
</dbReference>
<dbReference type="SMR" id="B6ENA0"/>
<dbReference type="KEGG" id="vsa:VSAL_I2834"/>
<dbReference type="eggNOG" id="COG0757">
    <property type="taxonomic scope" value="Bacteria"/>
</dbReference>
<dbReference type="HOGENOM" id="CLU_090968_1_0_6"/>
<dbReference type="UniPathway" id="UPA00053">
    <property type="reaction ID" value="UER00086"/>
</dbReference>
<dbReference type="Proteomes" id="UP000001730">
    <property type="component" value="Chromosome 1"/>
</dbReference>
<dbReference type="GO" id="GO:0003855">
    <property type="term" value="F:3-dehydroquinate dehydratase activity"/>
    <property type="evidence" value="ECO:0007669"/>
    <property type="project" value="UniProtKB-UniRule"/>
</dbReference>
<dbReference type="GO" id="GO:0008652">
    <property type="term" value="P:amino acid biosynthetic process"/>
    <property type="evidence" value="ECO:0007669"/>
    <property type="project" value="UniProtKB-KW"/>
</dbReference>
<dbReference type="GO" id="GO:0009073">
    <property type="term" value="P:aromatic amino acid family biosynthetic process"/>
    <property type="evidence" value="ECO:0007669"/>
    <property type="project" value="UniProtKB-KW"/>
</dbReference>
<dbReference type="GO" id="GO:0009423">
    <property type="term" value="P:chorismate biosynthetic process"/>
    <property type="evidence" value="ECO:0007669"/>
    <property type="project" value="UniProtKB-UniRule"/>
</dbReference>
<dbReference type="GO" id="GO:0019631">
    <property type="term" value="P:quinate catabolic process"/>
    <property type="evidence" value="ECO:0007669"/>
    <property type="project" value="TreeGrafter"/>
</dbReference>
<dbReference type="CDD" id="cd00466">
    <property type="entry name" value="DHQase_II"/>
    <property type="match status" value="1"/>
</dbReference>
<dbReference type="Gene3D" id="3.40.50.9100">
    <property type="entry name" value="Dehydroquinase, class II"/>
    <property type="match status" value="1"/>
</dbReference>
<dbReference type="HAMAP" id="MF_00169">
    <property type="entry name" value="AroQ"/>
    <property type="match status" value="1"/>
</dbReference>
<dbReference type="InterPro" id="IPR001874">
    <property type="entry name" value="DHquinase_II"/>
</dbReference>
<dbReference type="InterPro" id="IPR018509">
    <property type="entry name" value="DHquinase_II_CS"/>
</dbReference>
<dbReference type="InterPro" id="IPR036441">
    <property type="entry name" value="DHquinase_II_sf"/>
</dbReference>
<dbReference type="NCBIfam" id="TIGR01088">
    <property type="entry name" value="aroQ"/>
    <property type="match status" value="1"/>
</dbReference>
<dbReference type="NCBIfam" id="NF003804">
    <property type="entry name" value="PRK05395.1-1"/>
    <property type="match status" value="1"/>
</dbReference>
<dbReference type="NCBIfam" id="NF003805">
    <property type="entry name" value="PRK05395.1-2"/>
    <property type="match status" value="1"/>
</dbReference>
<dbReference type="NCBIfam" id="NF003806">
    <property type="entry name" value="PRK05395.1-3"/>
    <property type="match status" value="1"/>
</dbReference>
<dbReference type="NCBIfam" id="NF003807">
    <property type="entry name" value="PRK05395.1-4"/>
    <property type="match status" value="1"/>
</dbReference>
<dbReference type="PANTHER" id="PTHR21272">
    <property type="entry name" value="CATABOLIC 3-DEHYDROQUINASE"/>
    <property type="match status" value="1"/>
</dbReference>
<dbReference type="PANTHER" id="PTHR21272:SF3">
    <property type="entry name" value="CATABOLIC 3-DEHYDROQUINASE"/>
    <property type="match status" value="1"/>
</dbReference>
<dbReference type="Pfam" id="PF01220">
    <property type="entry name" value="DHquinase_II"/>
    <property type="match status" value="1"/>
</dbReference>
<dbReference type="PIRSF" id="PIRSF001399">
    <property type="entry name" value="DHquinase_II"/>
    <property type="match status" value="1"/>
</dbReference>
<dbReference type="SUPFAM" id="SSF52304">
    <property type="entry name" value="Type II 3-dehydroquinate dehydratase"/>
    <property type="match status" value="1"/>
</dbReference>
<dbReference type="PROSITE" id="PS01029">
    <property type="entry name" value="DEHYDROQUINASE_II"/>
    <property type="match status" value="1"/>
</dbReference>
<evidence type="ECO:0000255" key="1">
    <source>
        <dbReference type="HAMAP-Rule" id="MF_00169"/>
    </source>
</evidence>
<organism>
    <name type="scientific">Aliivibrio salmonicida (strain LFI1238)</name>
    <name type="common">Vibrio salmonicida (strain LFI1238)</name>
    <dbReference type="NCBI Taxonomy" id="316275"/>
    <lineage>
        <taxon>Bacteria</taxon>
        <taxon>Pseudomonadati</taxon>
        <taxon>Pseudomonadota</taxon>
        <taxon>Gammaproteobacteria</taxon>
        <taxon>Vibrionales</taxon>
        <taxon>Vibrionaceae</taxon>
        <taxon>Aliivibrio</taxon>
    </lineage>
</organism>
<comment type="function">
    <text evidence="1">Catalyzes a trans-dehydration via an enolate intermediate.</text>
</comment>
<comment type="catalytic activity">
    <reaction evidence="1">
        <text>3-dehydroquinate = 3-dehydroshikimate + H2O</text>
        <dbReference type="Rhea" id="RHEA:21096"/>
        <dbReference type="ChEBI" id="CHEBI:15377"/>
        <dbReference type="ChEBI" id="CHEBI:16630"/>
        <dbReference type="ChEBI" id="CHEBI:32364"/>
        <dbReference type="EC" id="4.2.1.10"/>
    </reaction>
</comment>
<comment type="pathway">
    <text evidence="1">Metabolic intermediate biosynthesis; chorismate biosynthesis; chorismate from D-erythrose 4-phosphate and phosphoenolpyruvate: step 3/7.</text>
</comment>
<comment type="subunit">
    <text evidence="1">Homododecamer.</text>
</comment>
<comment type="similarity">
    <text evidence="1">Belongs to the type-II 3-dehydroquinase family.</text>
</comment>
<accession>B6ENA0</accession>
<proteinExistence type="inferred from homology"/>
<feature type="chain" id="PRO_1000097591" description="3-dehydroquinate dehydratase">
    <location>
        <begin position="1"/>
        <end position="149"/>
    </location>
</feature>
<feature type="active site" description="Proton acceptor" evidence="1">
    <location>
        <position position="26"/>
    </location>
</feature>
<feature type="active site" description="Proton donor" evidence="1">
    <location>
        <position position="103"/>
    </location>
</feature>
<feature type="binding site" evidence="1">
    <location>
        <position position="77"/>
    </location>
    <ligand>
        <name>substrate</name>
    </ligand>
</feature>
<feature type="binding site" evidence="1">
    <location>
        <position position="83"/>
    </location>
    <ligand>
        <name>substrate</name>
    </ligand>
</feature>
<feature type="binding site" evidence="1">
    <location>
        <position position="90"/>
    </location>
    <ligand>
        <name>substrate</name>
    </ligand>
</feature>
<feature type="binding site" evidence="1">
    <location>
        <begin position="104"/>
        <end position="105"/>
    </location>
    <ligand>
        <name>substrate</name>
    </ligand>
</feature>
<feature type="binding site" evidence="1">
    <location>
        <position position="114"/>
    </location>
    <ligand>
        <name>substrate</name>
    </ligand>
</feature>
<feature type="site" description="Transition state stabilizer" evidence="1">
    <location>
        <position position="21"/>
    </location>
</feature>
<name>AROQ_ALISL</name>
<reference key="1">
    <citation type="journal article" date="2008" name="BMC Genomics">
        <title>The genome sequence of the fish pathogen Aliivibrio salmonicida strain LFI1238 shows extensive evidence of gene decay.</title>
        <authorList>
            <person name="Hjerde E."/>
            <person name="Lorentzen M.S."/>
            <person name="Holden M.T."/>
            <person name="Seeger K."/>
            <person name="Paulsen S."/>
            <person name="Bason N."/>
            <person name="Churcher C."/>
            <person name="Harris D."/>
            <person name="Norbertczak H."/>
            <person name="Quail M.A."/>
            <person name="Sanders S."/>
            <person name="Thurston S."/>
            <person name="Parkhill J."/>
            <person name="Willassen N.P."/>
            <person name="Thomson N.R."/>
        </authorList>
    </citation>
    <scope>NUCLEOTIDE SEQUENCE [LARGE SCALE GENOMIC DNA]</scope>
    <source>
        <strain>LFI1238</strain>
    </source>
</reference>
<gene>
    <name evidence="1" type="primary">aroQ</name>
    <name type="ordered locus">VSAL_I2834</name>
</gene>